<evidence type="ECO:0000255" key="1">
    <source>
        <dbReference type="PROSITE-ProRule" id="PRU00172"/>
    </source>
</evidence>
<evidence type="ECO:0000256" key="2">
    <source>
        <dbReference type="SAM" id="MobiDB-lite"/>
    </source>
</evidence>
<evidence type="ECO:0000269" key="3">
    <source>
    </source>
</evidence>
<evidence type="ECO:0000303" key="4">
    <source>
    </source>
</evidence>
<evidence type="ECO:0000303" key="5">
    <source>
    </source>
</evidence>
<evidence type="ECO:0000303" key="6">
    <source ref="2"/>
</evidence>
<evidence type="ECO:0000305" key="7"/>
<evidence type="ECO:0007744" key="8">
    <source>
    </source>
</evidence>
<dbReference type="EMBL" id="AF385429">
    <property type="protein sequence ID" value="AAM43830.1"/>
    <property type="molecule type" value="mRNA"/>
</dbReference>
<dbReference type="EMBL" id="AF385430">
    <property type="protein sequence ID" value="AAM43831.1"/>
    <property type="molecule type" value="mRNA"/>
</dbReference>
<dbReference type="EMBL" id="AF314817">
    <property type="protein sequence ID" value="AAL16675.1"/>
    <property type="molecule type" value="mRNA"/>
</dbReference>
<dbReference type="EMBL" id="AK097090">
    <property type="protein sequence ID" value="BAC04947.1"/>
    <property type="molecule type" value="mRNA"/>
</dbReference>
<dbReference type="EMBL" id="AL035530">
    <property type="status" value="NOT_ANNOTATED_CDS"/>
    <property type="molecule type" value="Genomic_DNA"/>
</dbReference>
<dbReference type="EMBL" id="BC015859">
    <property type="protein sequence ID" value="AAH15859.1"/>
    <property type="molecule type" value="mRNA"/>
</dbReference>
<dbReference type="EMBL" id="BC111731">
    <property type="protein sequence ID" value="AAI11732.1"/>
    <property type="molecule type" value="mRNA"/>
</dbReference>
<dbReference type="CCDS" id="CCDS5261.1">
    <molecule id="Q8N103-1"/>
</dbReference>
<dbReference type="CCDS" id="CCDS5262.1">
    <molecule id="Q8N103-2"/>
</dbReference>
<dbReference type="CCDS" id="CCDS5263.1">
    <molecule id="Q8N103-4"/>
</dbReference>
<dbReference type="RefSeq" id="NP_001265662.1">
    <property type="nucleotide sequence ID" value="NM_001278733.1"/>
</dbReference>
<dbReference type="RefSeq" id="NP_473455.2">
    <molecule id="Q8N103-1"/>
    <property type="nucleotide sequence ID" value="NM_054114.4"/>
</dbReference>
<dbReference type="RefSeq" id="NP_620165.1">
    <molecule id="Q8N103-4"/>
    <property type="nucleotide sequence ID" value="NM_138810.4"/>
</dbReference>
<dbReference type="RefSeq" id="NP_687034.1">
    <molecule id="Q8N103-2"/>
    <property type="nucleotide sequence ID" value="NM_152133.3"/>
</dbReference>
<dbReference type="SMR" id="Q8N103"/>
<dbReference type="BioGRID" id="125587">
    <property type="interactions" value="22"/>
</dbReference>
<dbReference type="ELM" id="Q8N103"/>
<dbReference type="FunCoup" id="Q8N103">
    <property type="interactions" value="577"/>
</dbReference>
<dbReference type="IntAct" id="Q8N103">
    <property type="interactions" value="16"/>
</dbReference>
<dbReference type="STRING" id="9606.ENSP00000356033"/>
<dbReference type="GlyGen" id="Q8N103">
    <property type="glycosylation" value="2 sites, 1 O-linked glycan (2 sites)"/>
</dbReference>
<dbReference type="iPTMnet" id="Q8N103"/>
<dbReference type="PhosphoSitePlus" id="Q8N103"/>
<dbReference type="BioMuta" id="TAGAP"/>
<dbReference type="DMDM" id="74750874"/>
<dbReference type="jPOST" id="Q8N103"/>
<dbReference type="MassIVE" id="Q8N103"/>
<dbReference type="PaxDb" id="9606-ENSP00000356033"/>
<dbReference type="PeptideAtlas" id="Q8N103"/>
<dbReference type="ProteomicsDB" id="71499">
    <molecule id="Q8N103-1"/>
</dbReference>
<dbReference type="ProteomicsDB" id="71500">
    <molecule id="Q8N103-2"/>
</dbReference>
<dbReference type="ProteomicsDB" id="71501">
    <molecule id="Q8N103-3"/>
</dbReference>
<dbReference type="ProteomicsDB" id="71502">
    <molecule id="Q8N103-4"/>
</dbReference>
<dbReference type="Antibodypedia" id="33449">
    <property type="antibodies" value="186 antibodies from 23 providers"/>
</dbReference>
<dbReference type="DNASU" id="117289"/>
<dbReference type="Ensembl" id="ENST00000326965.7">
    <molecule id="Q8N103-2"/>
    <property type="protein sequence ID" value="ENSP00000322650.6"/>
    <property type="gene ID" value="ENSG00000164691.19"/>
</dbReference>
<dbReference type="Ensembl" id="ENST00000338313.5">
    <molecule id="Q8N103-4"/>
    <property type="protein sequence ID" value="ENSP00000340217.5"/>
    <property type="gene ID" value="ENSG00000164691.19"/>
</dbReference>
<dbReference type="Ensembl" id="ENST00000367066.8">
    <molecule id="Q8N103-1"/>
    <property type="protein sequence ID" value="ENSP00000356033.4"/>
    <property type="gene ID" value="ENSG00000164691.19"/>
</dbReference>
<dbReference type="GeneID" id="117289"/>
<dbReference type="KEGG" id="hsa:117289"/>
<dbReference type="MANE-Select" id="ENST00000367066.8">
    <property type="protein sequence ID" value="ENSP00000356033.4"/>
    <property type="RefSeq nucleotide sequence ID" value="NM_054114.5"/>
    <property type="RefSeq protein sequence ID" value="NP_473455.2"/>
</dbReference>
<dbReference type="UCSC" id="uc003qrz.5">
    <molecule id="Q8N103-1"/>
    <property type="organism name" value="human"/>
</dbReference>
<dbReference type="AGR" id="HGNC:15669"/>
<dbReference type="CTD" id="117289"/>
<dbReference type="DisGeNET" id="117289"/>
<dbReference type="GeneCards" id="TAGAP"/>
<dbReference type="HGNC" id="HGNC:15669">
    <property type="gene designation" value="TAGAP"/>
</dbReference>
<dbReference type="HPA" id="ENSG00000164691">
    <property type="expression patterns" value="Tissue enhanced (bone marrow, lymphoid tissue)"/>
</dbReference>
<dbReference type="MalaCards" id="TAGAP"/>
<dbReference type="MIM" id="609667">
    <property type="type" value="gene"/>
</dbReference>
<dbReference type="neXtProt" id="NX_Q8N103"/>
<dbReference type="OpenTargets" id="ENSG00000164691"/>
<dbReference type="PharmGKB" id="PA38016"/>
<dbReference type="VEuPathDB" id="HostDB:ENSG00000164691"/>
<dbReference type="eggNOG" id="KOG4724">
    <property type="taxonomic scope" value="Eukaryota"/>
</dbReference>
<dbReference type="GeneTree" id="ENSGT00940000157993"/>
<dbReference type="HOGENOM" id="CLU_014209_1_0_1"/>
<dbReference type="InParanoid" id="Q8N103"/>
<dbReference type="OMA" id="PRTESWK"/>
<dbReference type="OrthoDB" id="27389at2759"/>
<dbReference type="PAN-GO" id="Q8N103">
    <property type="GO annotations" value="1 GO annotation based on evolutionary models"/>
</dbReference>
<dbReference type="PhylomeDB" id="Q8N103"/>
<dbReference type="TreeFam" id="TF331062"/>
<dbReference type="PathwayCommons" id="Q8N103"/>
<dbReference type="Reactome" id="R-HSA-8980692">
    <property type="pathway name" value="RHOA GTPase cycle"/>
</dbReference>
<dbReference type="Reactome" id="R-HSA-9013148">
    <property type="pathway name" value="CDC42 GTPase cycle"/>
</dbReference>
<dbReference type="Reactome" id="R-HSA-9013149">
    <property type="pathway name" value="RAC1 GTPase cycle"/>
</dbReference>
<dbReference type="SignaLink" id="Q8N103"/>
<dbReference type="SIGNOR" id="Q8N103"/>
<dbReference type="BioGRID-ORCS" id="117289">
    <property type="hits" value="11 hits in 1152 CRISPR screens"/>
</dbReference>
<dbReference type="ChiTaRS" id="TAGAP">
    <property type="organism name" value="human"/>
</dbReference>
<dbReference type="GenomeRNAi" id="117289"/>
<dbReference type="Pharos" id="Q8N103">
    <property type="development level" value="Tbio"/>
</dbReference>
<dbReference type="PRO" id="PR:Q8N103"/>
<dbReference type="Proteomes" id="UP000005640">
    <property type="component" value="Chromosome 6"/>
</dbReference>
<dbReference type="RNAct" id="Q8N103">
    <property type="molecule type" value="protein"/>
</dbReference>
<dbReference type="Bgee" id="ENSG00000164691">
    <property type="expression patterns" value="Expressed in bone marrow cell and 154 other cell types or tissues"/>
</dbReference>
<dbReference type="ExpressionAtlas" id="Q8N103">
    <property type="expression patterns" value="baseline and differential"/>
</dbReference>
<dbReference type="GO" id="GO:0005829">
    <property type="term" value="C:cytosol"/>
    <property type="evidence" value="ECO:0000304"/>
    <property type="project" value="Reactome"/>
</dbReference>
<dbReference type="GO" id="GO:0005096">
    <property type="term" value="F:GTPase activator activity"/>
    <property type="evidence" value="ECO:0000318"/>
    <property type="project" value="GO_Central"/>
</dbReference>
<dbReference type="GO" id="GO:0005085">
    <property type="term" value="F:guanyl-nucleotide exchange factor activity"/>
    <property type="evidence" value="ECO:0007669"/>
    <property type="project" value="UniProtKB-KW"/>
</dbReference>
<dbReference type="GO" id="GO:0035023">
    <property type="term" value="P:regulation of Rho protein signal transduction"/>
    <property type="evidence" value="ECO:0007669"/>
    <property type="project" value="InterPro"/>
</dbReference>
<dbReference type="GO" id="GO:0051056">
    <property type="term" value="P:regulation of small GTPase mediated signal transduction"/>
    <property type="evidence" value="ECO:0000304"/>
    <property type="project" value="Reactome"/>
</dbReference>
<dbReference type="GO" id="GO:0007165">
    <property type="term" value="P:signal transduction"/>
    <property type="evidence" value="ECO:0007669"/>
    <property type="project" value="InterPro"/>
</dbReference>
<dbReference type="CDD" id="cd04402">
    <property type="entry name" value="RhoGAP_ARHGAP20"/>
    <property type="match status" value="1"/>
</dbReference>
<dbReference type="FunFam" id="1.10.555.10:FF:000036">
    <property type="entry name" value="T-cell activation Rho GTPase-activating protein"/>
    <property type="match status" value="1"/>
</dbReference>
<dbReference type="Gene3D" id="1.10.555.10">
    <property type="entry name" value="Rho GTPase activation protein"/>
    <property type="match status" value="1"/>
</dbReference>
<dbReference type="InterPro" id="IPR047886">
    <property type="entry name" value="ARHGAP20-like_RhoGAP"/>
</dbReference>
<dbReference type="InterPro" id="IPR008936">
    <property type="entry name" value="Rho_GTPase_activation_prot"/>
</dbReference>
<dbReference type="InterPro" id="IPR000198">
    <property type="entry name" value="RhoGAP_dom"/>
</dbReference>
<dbReference type="PANTHER" id="PTHR23179">
    <property type="entry name" value="T-CELL ACTIVATION RHO GTPASE ACTIVATING PROTEIN-RELATED"/>
    <property type="match status" value="1"/>
</dbReference>
<dbReference type="PANTHER" id="PTHR23179:SF26">
    <property type="entry name" value="T-CELL ACTIVATION RHO GTPASE-ACTIVATING PROTEIN"/>
    <property type="match status" value="1"/>
</dbReference>
<dbReference type="Pfam" id="PF00620">
    <property type="entry name" value="RhoGAP"/>
    <property type="match status" value="1"/>
</dbReference>
<dbReference type="SMART" id="SM00324">
    <property type="entry name" value="RhoGAP"/>
    <property type="match status" value="1"/>
</dbReference>
<dbReference type="SUPFAM" id="SSF48350">
    <property type="entry name" value="GTPase activation domain, GAP"/>
    <property type="match status" value="1"/>
</dbReference>
<dbReference type="PROSITE" id="PS50238">
    <property type="entry name" value="RHOGAP"/>
    <property type="match status" value="1"/>
</dbReference>
<reference key="1">
    <citation type="journal article" date="2004" name="Genomics">
        <title>T lymphocyte activation gene identification by coregulated expression on DNA microarrays.</title>
        <authorList>
            <person name="Mao M."/>
            <person name="Biery M.C."/>
            <person name="Kobayashi S.V."/>
            <person name="Ward T."/>
            <person name="Schimmack G."/>
            <person name="Burchard J."/>
            <person name="Schelter J.M."/>
            <person name="Dai H."/>
            <person name="He Y.D."/>
            <person name="Linsley P.S."/>
        </authorList>
    </citation>
    <scope>NUCLEOTIDE SEQUENCE [MRNA] (ISOFORMS 1 AND 2)</scope>
    <scope>FUNCTION</scope>
</reference>
<reference key="2">
    <citation type="submission" date="2000-10" db="EMBL/GenBank/DDBJ databases">
        <title>FKSG15, a novel 57 kDa protein, shares the N-terminal region with FOP.</title>
        <authorList>
            <person name="Wang Y.-G."/>
            <person name="Gong L."/>
        </authorList>
    </citation>
    <scope>NUCLEOTIDE SEQUENCE [MRNA] (ISOFORM 3)</scope>
</reference>
<reference key="3">
    <citation type="journal article" date="2004" name="Nat. Genet.">
        <title>Complete sequencing and characterization of 21,243 full-length human cDNAs.</title>
        <authorList>
            <person name="Ota T."/>
            <person name="Suzuki Y."/>
            <person name="Nishikawa T."/>
            <person name="Otsuki T."/>
            <person name="Sugiyama T."/>
            <person name="Irie R."/>
            <person name="Wakamatsu A."/>
            <person name="Hayashi K."/>
            <person name="Sato H."/>
            <person name="Nagai K."/>
            <person name="Kimura K."/>
            <person name="Makita H."/>
            <person name="Sekine M."/>
            <person name="Obayashi M."/>
            <person name="Nishi T."/>
            <person name="Shibahara T."/>
            <person name="Tanaka T."/>
            <person name="Ishii S."/>
            <person name="Yamamoto J."/>
            <person name="Saito K."/>
            <person name="Kawai Y."/>
            <person name="Isono Y."/>
            <person name="Nakamura Y."/>
            <person name="Nagahari K."/>
            <person name="Murakami K."/>
            <person name="Yasuda T."/>
            <person name="Iwayanagi T."/>
            <person name="Wagatsuma M."/>
            <person name="Shiratori A."/>
            <person name="Sudo H."/>
            <person name="Hosoiri T."/>
            <person name="Kaku Y."/>
            <person name="Kodaira H."/>
            <person name="Kondo H."/>
            <person name="Sugawara M."/>
            <person name="Takahashi M."/>
            <person name="Kanda K."/>
            <person name="Yokoi T."/>
            <person name="Furuya T."/>
            <person name="Kikkawa E."/>
            <person name="Omura Y."/>
            <person name="Abe K."/>
            <person name="Kamihara K."/>
            <person name="Katsuta N."/>
            <person name="Sato K."/>
            <person name="Tanikawa M."/>
            <person name="Yamazaki M."/>
            <person name="Ninomiya K."/>
            <person name="Ishibashi T."/>
            <person name="Yamashita H."/>
            <person name="Murakawa K."/>
            <person name="Fujimori K."/>
            <person name="Tanai H."/>
            <person name="Kimata M."/>
            <person name="Watanabe M."/>
            <person name="Hiraoka S."/>
            <person name="Chiba Y."/>
            <person name="Ishida S."/>
            <person name="Ono Y."/>
            <person name="Takiguchi S."/>
            <person name="Watanabe S."/>
            <person name="Yosida M."/>
            <person name="Hotuta T."/>
            <person name="Kusano J."/>
            <person name="Kanehori K."/>
            <person name="Takahashi-Fujii A."/>
            <person name="Hara H."/>
            <person name="Tanase T.-O."/>
            <person name="Nomura Y."/>
            <person name="Togiya S."/>
            <person name="Komai F."/>
            <person name="Hara R."/>
            <person name="Takeuchi K."/>
            <person name="Arita M."/>
            <person name="Imose N."/>
            <person name="Musashino K."/>
            <person name="Yuuki H."/>
            <person name="Oshima A."/>
            <person name="Sasaki N."/>
            <person name="Aotsuka S."/>
            <person name="Yoshikawa Y."/>
            <person name="Matsunawa H."/>
            <person name="Ichihara T."/>
            <person name="Shiohata N."/>
            <person name="Sano S."/>
            <person name="Moriya S."/>
            <person name="Momiyama H."/>
            <person name="Satoh N."/>
            <person name="Takami S."/>
            <person name="Terashima Y."/>
            <person name="Suzuki O."/>
            <person name="Nakagawa S."/>
            <person name="Senoh A."/>
            <person name="Mizoguchi H."/>
            <person name="Goto Y."/>
            <person name="Shimizu F."/>
            <person name="Wakebe H."/>
            <person name="Hishigaki H."/>
            <person name="Watanabe T."/>
            <person name="Sugiyama A."/>
            <person name="Takemoto M."/>
            <person name="Kawakami B."/>
            <person name="Yamazaki M."/>
            <person name="Watanabe K."/>
            <person name="Kumagai A."/>
            <person name="Itakura S."/>
            <person name="Fukuzumi Y."/>
            <person name="Fujimori Y."/>
            <person name="Komiyama M."/>
            <person name="Tashiro H."/>
            <person name="Tanigami A."/>
            <person name="Fujiwara T."/>
            <person name="Ono T."/>
            <person name="Yamada K."/>
            <person name="Fujii Y."/>
            <person name="Ozaki K."/>
            <person name="Hirao M."/>
            <person name="Ohmori Y."/>
            <person name="Kawabata A."/>
            <person name="Hikiji T."/>
            <person name="Kobatake N."/>
            <person name="Inagaki H."/>
            <person name="Ikema Y."/>
            <person name="Okamoto S."/>
            <person name="Okitani R."/>
            <person name="Kawakami T."/>
            <person name="Noguchi S."/>
            <person name="Itoh T."/>
            <person name="Shigeta K."/>
            <person name="Senba T."/>
            <person name="Matsumura K."/>
            <person name="Nakajima Y."/>
            <person name="Mizuno T."/>
            <person name="Morinaga M."/>
            <person name="Sasaki M."/>
            <person name="Togashi T."/>
            <person name="Oyama M."/>
            <person name="Hata H."/>
            <person name="Watanabe M."/>
            <person name="Komatsu T."/>
            <person name="Mizushima-Sugano J."/>
            <person name="Satoh T."/>
            <person name="Shirai Y."/>
            <person name="Takahashi Y."/>
            <person name="Nakagawa K."/>
            <person name="Okumura K."/>
            <person name="Nagase T."/>
            <person name="Nomura N."/>
            <person name="Kikuchi H."/>
            <person name="Masuho Y."/>
            <person name="Yamashita R."/>
            <person name="Nakai K."/>
            <person name="Yada T."/>
            <person name="Nakamura Y."/>
            <person name="Ohara O."/>
            <person name="Isogai T."/>
            <person name="Sugano S."/>
        </authorList>
    </citation>
    <scope>NUCLEOTIDE SEQUENCE [LARGE SCALE MRNA] (ISOFORM 1)</scope>
    <source>
        <tissue>Spleen</tissue>
    </source>
</reference>
<reference key="4">
    <citation type="journal article" date="2003" name="Nature">
        <title>The DNA sequence and analysis of human chromosome 6.</title>
        <authorList>
            <person name="Mungall A.J."/>
            <person name="Palmer S.A."/>
            <person name="Sims S.K."/>
            <person name="Edwards C.A."/>
            <person name="Ashurst J.L."/>
            <person name="Wilming L."/>
            <person name="Jones M.C."/>
            <person name="Horton R."/>
            <person name="Hunt S.E."/>
            <person name="Scott C.E."/>
            <person name="Gilbert J.G.R."/>
            <person name="Clamp M.E."/>
            <person name="Bethel G."/>
            <person name="Milne S."/>
            <person name="Ainscough R."/>
            <person name="Almeida J.P."/>
            <person name="Ambrose K.D."/>
            <person name="Andrews T.D."/>
            <person name="Ashwell R.I.S."/>
            <person name="Babbage A.K."/>
            <person name="Bagguley C.L."/>
            <person name="Bailey J."/>
            <person name="Banerjee R."/>
            <person name="Barker D.J."/>
            <person name="Barlow K.F."/>
            <person name="Bates K."/>
            <person name="Beare D.M."/>
            <person name="Beasley H."/>
            <person name="Beasley O."/>
            <person name="Bird C.P."/>
            <person name="Blakey S.E."/>
            <person name="Bray-Allen S."/>
            <person name="Brook J."/>
            <person name="Brown A.J."/>
            <person name="Brown J.Y."/>
            <person name="Burford D.C."/>
            <person name="Burrill W."/>
            <person name="Burton J."/>
            <person name="Carder C."/>
            <person name="Carter N.P."/>
            <person name="Chapman J.C."/>
            <person name="Clark S.Y."/>
            <person name="Clark G."/>
            <person name="Clee C.M."/>
            <person name="Clegg S."/>
            <person name="Cobley V."/>
            <person name="Collier R.E."/>
            <person name="Collins J.E."/>
            <person name="Colman L.K."/>
            <person name="Corby N.R."/>
            <person name="Coville G.J."/>
            <person name="Culley K.M."/>
            <person name="Dhami P."/>
            <person name="Davies J."/>
            <person name="Dunn M."/>
            <person name="Earthrowl M.E."/>
            <person name="Ellington A.E."/>
            <person name="Evans K.A."/>
            <person name="Faulkner L."/>
            <person name="Francis M.D."/>
            <person name="Frankish A."/>
            <person name="Frankland J."/>
            <person name="French L."/>
            <person name="Garner P."/>
            <person name="Garnett J."/>
            <person name="Ghori M.J."/>
            <person name="Gilby L.M."/>
            <person name="Gillson C.J."/>
            <person name="Glithero R.J."/>
            <person name="Grafham D.V."/>
            <person name="Grant M."/>
            <person name="Gribble S."/>
            <person name="Griffiths C."/>
            <person name="Griffiths M.N.D."/>
            <person name="Hall R."/>
            <person name="Halls K.S."/>
            <person name="Hammond S."/>
            <person name="Harley J.L."/>
            <person name="Hart E.A."/>
            <person name="Heath P.D."/>
            <person name="Heathcott R."/>
            <person name="Holmes S.J."/>
            <person name="Howden P.J."/>
            <person name="Howe K.L."/>
            <person name="Howell G.R."/>
            <person name="Huckle E."/>
            <person name="Humphray S.J."/>
            <person name="Humphries M.D."/>
            <person name="Hunt A.R."/>
            <person name="Johnson C.M."/>
            <person name="Joy A.A."/>
            <person name="Kay M."/>
            <person name="Keenan S.J."/>
            <person name="Kimberley A.M."/>
            <person name="King A."/>
            <person name="Laird G.K."/>
            <person name="Langford C."/>
            <person name="Lawlor S."/>
            <person name="Leongamornlert D.A."/>
            <person name="Leversha M."/>
            <person name="Lloyd C.R."/>
            <person name="Lloyd D.M."/>
            <person name="Loveland J.E."/>
            <person name="Lovell J."/>
            <person name="Martin S."/>
            <person name="Mashreghi-Mohammadi M."/>
            <person name="Maslen G.L."/>
            <person name="Matthews L."/>
            <person name="McCann O.T."/>
            <person name="McLaren S.J."/>
            <person name="McLay K."/>
            <person name="McMurray A."/>
            <person name="Moore M.J.F."/>
            <person name="Mullikin J.C."/>
            <person name="Niblett D."/>
            <person name="Nickerson T."/>
            <person name="Novik K.L."/>
            <person name="Oliver K."/>
            <person name="Overton-Larty E.K."/>
            <person name="Parker A."/>
            <person name="Patel R."/>
            <person name="Pearce A.V."/>
            <person name="Peck A.I."/>
            <person name="Phillimore B.J.C.T."/>
            <person name="Phillips S."/>
            <person name="Plumb R.W."/>
            <person name="Porter K.M."/>
            <person name="Ramsey Y."/>
            <person name="Ranby S.A."/>
            <person name="Rice C.M."/>
            <person name="Ross M.T."/>
            <person name="Searle S.M."/>
            <person name="Sehra H.K."/>
            <person name="Sheridan E."/>
            <person name="Skuce C.D."/>
            <person name="Smith S."/>
            <person name="Smith M."/>
            <person name="Spraggon L."/>
            <person name="Squares S.L."/>
            <person name="Steward C.A."/>
            <person name="Sycamore N."/>
            <person name="Tamlyn-Hall G."/>
            <person name="Tester J."/>
            <person name="Theaker A.J."/>
            <person name="Thomas D.W."/>
            <person name="Thorpe A."/>
            <person name="Tracey A."/>
            <person name="Tromans A."/>
            <person name="Tubby B."/>
            <person name="Wall M."/>
            <person name="Wallis J.M."/>
            <person name="West A.P."/>
            <person name="White S.S."/>
            <person name="Whitehead S.L."/>
            <person name="Whittaker H."/>
            <person name="Wild A."/>
            <person name="Willey D.J."/>
            <person name="Wilmer T.E."/>
            <person name="Wood J.M."/>
            <person name="Wray P.W."/>
            <person name="Wyatt J.C."/>
            <person name="Young L."/>
            <person name="Younger R.M."/>
            <person name="Bentley D.R."/>
            <person name="Coulson A."/>
            <person name="Durbin R.M."/>
            <person name="Hubbard T."/>
            <person name="Sulston J.E."/>
            <person name="Dunham I."/>
            <person name="Rogers J."/>
            <person name="Beck S."/>
        </authorList>
    </citation>
    <scope>NUCLEOTIDE SEQUENCE [LARGE SCALE GENOMIC DNA]</scope>
</reference>
<reference key="5">
    <citation type="journal article" date="2004" name="Genome Res.">
        <title>The status, quality, and expansion of the NIH full-length cDNA project: the Mammalian Gene Collection (MGC).</title>
        <authorList>
            <consortium name="The MGC Project Team"/>
        </authorList>
    </citation>
    <scope>NUCLEOTIDE SEQUENCE [LARGE SCALE MRNA] (ISOFORMS 1 AND 4)</scope>
    <source>
        <tissue>Lung</tissue>
    </source>
</reference>
<reference key="6">
    <citation type="journal article" date="2014" name="J. Proteomics">
        <title>An enzyme assisted RP-RPLC approach for in-depth analysis of human liver phosphoproteome.</title>
        <authorList>
            <person name="Bian Y."/>
            <person name="Song C."/>
            <person name="Cheng K."/>
            <person name="Dong M."/>
            <person name="Wang F."/>
            <person name="Huang J."/>
            <person name="Sun D."/>
            <person name="Wang L."/>
            <person name="Ye M."/>
            <person name="Zou H."/>
        </authorList>
    </citation>
    <scope>PHOSPHORYLATION [LARGE SCALE ANALYSIS] AT SER-400</scope>
    <scope>IDENTIFICATION BY MASS SPECTROMETRY [LARGE SCALE ANALYSIS]</scope>
    <source>
        <tissue>Liver</tissue>
    </source>
</reference>
<protein>
    <recommendedName>
        <fullName>T-cell activation Rho GTPase-activating protein</fullName>
    </recommendedName>
    <alternativeName>
        <fullName>T-cell activation GTPase-activating protein</fullName>
    </alternativeName>
</protein>
<accession>Q8N103</accession>
<accession>Q2NKM8</accession>
<accession>Q8NI40</accession>
<accession>Q96KZ2</accession>
<accession>Q96QA2</accession>
<name>TAGAP_HUMAN</name>
<keyword id="KW-0025">Alternative splicing</keyword>
<keyword id="KW-0343">GTPase activation</keyword>
<keyword id="KW-0344">Guanine-nucleotide releasing factor</keyword>
<keyword id="KW-0597">Phosphoprotein</keyword>
<keyword id="KW-1267">Proteomics identification</keyword>
<keyword id="KW-1185">Reference proteome</keyword>
<sequence length="731" mass="80703">MKLRSSHNASKTLNANNMETLIECQSEGDIKEHPLLASCESEDSICQLIEVKKRKKVLSWPFLMRRLSPASDFSGALETDLKASLFDQPLSIICGDSDTLPRPIQDILTILCLKGPSTEGIFRRAANEKARKELKEELNSGDAVDLERLPVHLLAVVFKDFLRSIPRKLLSSDLFEEWMGALEMQDEEDRIEALKQVADKLPRPNLLLLKHLVYVLHLISKNSEVNRMDSSNLAICIGPNMLTLENDQSLSFEAQKDLNNKVKTLVEFLIDNCFEIFGENIPVHSSITSDDSLEHTDSSDVSTLQNDSAYDSNDPDVESNSSSGISSPSRQPQVPMATAAGLDSAGPQDAREVSPEPIVSTVARLKSSLAQPDRRYSEPSMPSSQECLESRVTNQTLTKSEGDFPVPRVGSRLESEEAEDPFPEEVFPAVQGKTKRPVDLKIKNLAPGSVLPRALVLKAFSSSSLDASSDSSPVASPSSPKRNFFSRHQSFTTKTEKGKPSREIKKHSMSFTFAPHKKVLTKNLSAGSGKSQDFTRDHVPRGVRKESQLAGRIVQENGCETHNQTARGFCLRPHALSVDDVFQGADWERPGSPPSYEEAMQGPAARLVASESQTVGSMTVGSMRARMLEAHCLLPPLPPAHHVEDSRHRGSKEPLPGHGLSPLPERWKQSRTVHASGDSLGHVSGPGRPELLPLRTVSESVQRNKRDCLVRRCSQPVFEADQFQYAKESYI</sequence>
<organism>
    <name type="scientific">Homo sapiens</name>
    <name type="common">Human</name>
    <dbReference type="NCBI Taxonomy" id="9606"/>
    <lineage>
        <taxon>Eukaryota</taxon>
        <taxon>Metazoa</taxon>
        <taxon>Chordata</taxon>
        <taxon>Craniata</taxon>
        <taxon>Vertebrata</taxon>
        <taxon>Euteleostomi</taxon>
        <taxon>Mammalia</taxon>
        <taxon>Eutheria</taxon>
        <taxon>Euarchontoglires</taxon>
        <taxon>Primates</taxon>
        <taxon>Haplorrhini</taxon>
        <taxon>Catarrhini</taxon>
        <taxon>Hominidae</taxon>
        <taxon>Homo</taxon>
    </lineage>
</organism>
<feature type="chain" id="PRO_0000056719" description="T-cell activation Rho GTPase-activating protein">
    <location>
        <begin position="1"/>
        <end position="731"/>
    </location>
</feature>
<feature type="domain" description="Rho-GAP" evidence="1">
    <location>
        <begin position="88"/>
        <end position="277"/>
    </location>
</feature>
<feature type="region of interest" description="Disordered" evidence="2">
    <location>
        <begin position="288"/>
        <end position="421"/>
    </location>
</feature>
<feature type="region of interest" description="Disordered" evidence="2">
    <location>
        <begin position="464"/>
        <end position="507"/>
    </location>
</feature>
<feature type="region of interest" description="Disordered" evidence="2">
    <location>
        <begin position="641"/>
        <end position="662"/>
    </location>
</feature>
<feature type="compositionally biased region" description="Polar residues" evidence="2">
    <location>
        <begin position="299"/>
        <end position="311"/>
    </location>
</feature>
<feature type="compositionally biased region" description="Low complexity" evidence="2">
    <location>
        <begin position="319"/>
        <end position="329"/>
    </location>
</feature>
<feature type="compositionally biased region" description="Polar residues" evidence="2">
    <location>
        <begin position="380"/>
        <end position="399"/>
    </location>
</feature>
<feature type="compositionally biased region" description="Low complexity" evidence="2">
    <location>
        <begin position="464"/>
        <end position="480"/>
    </location>
</feature>
<feature type="compositionally biased region" description="Basic and acidic residues" evidence="2">
    <location>
        <begin position="494"/>
        <end position="503"/>
    </location>
</feature>
<feature type="compositionally biased region" description="Basic and acidic residues" evidence="2">
    <location>
        <begin position="641"/>
        <end position="652"/>
    </location>
</feature>
<feature type="site" description="Arginine finger; crucial for GTP hydrolysis by stabilizing the transition state" evidence="1">
    <location>
        <position position="123"/>
    </location>
</feature>
<feature type="modified residue" description="Phosphoserine" evidence="8">
    <location>
        <position position="400"/>
    </location>
</feature>
<feature type="splice variant" id="VSP_015868" description="In isoform 3." evidence="6">
    <location>
        <begin position="1"/>
        <end position="209"/>
    </location>
</feature>
<feature type="splice variant" id="VSP_015869" description="In isoform 2." evidence="4">
    <location>
        <begin position="1"/>
        <end position="178"/>
    </location>
</feature>
<feature type="splice variant" id="VSP_015870" description="In isoform 3." evidence="6">
    <original>KHLVYVLHLISKNSEVNRMDSSNLAICIGPNMLTLENDQSLSFEAQKDLNNK</original>
    <variation>MAATAAAVVAEEDTELRDLLVQTLENSGVLNRIKAELRAAVFLALEEQEKVE</variation>
    <location>
        <begin position="210"/>
        <end position="261"/>
    </location>
</feature>
<feature type="splice variant" id="VSP_015871" description="In isoform 4." evidence="5">
    <original>KTLV</original>
    <variation>CSAY</variation>
    <location>
        <begin position="263"/>
        <end position="266"/>
    </location>
</feature>
<feature type="splice variant" id="VSP_015872" description="In isoform 4." evidence="5">
    <location>
        <begin position="267"/>
        <end position="731"/>
    </location>
</feature>
<feature type="sequence variant" id="VAR_049146" description="In dbSNP:rs35263580.">
    <original>G</original>
    <variation>D</variation>
    <location>
        <position position="346"/>
    </location>
</feature>
<comment type="function">
    <text evidence="3">May function as a GTPase-activating protein and may play important roles during T-cell activation.</text>
</comment>
<comment type="interaction">
    <interactant intactId="EBI-12136823">
        <id>Q8N103</id>
    </interactant>
    <interactant intactId="EBI-7116203">
        <id>O75031</id>
        <label>HSF2BP</label>
    </interactant>
    <organismsDiffer>false</organismsDiffer>
    <experiments>3</experiments>
</comment>
<comment type="alternative products">
    <event type="alternative splicing"/>
    <isoform>
        <id>Q8N103-1</id>
        <name>1</name>
        <sequence type="displayed"/>
    </isoform>
    <isoform>
        <id>Q8N103-2</id>
        <name>2</name>
        <sequence type="described" ref="VSP_015869"/>
    </isoform>
    <isoform>
        <id>Q8N103-3</id>
        <name>3</name>
        <name>FKSG15</name>
        <sequence type="described" ref="VSP_015868 VSP_015870"/>
    </isoform>
    <isoform>
        <id>Q8N103-4</id>
        <name>4</name>
        <sequence type="described" ref="VSP_015871 VSP_015872"/>
    </isoform>
</comment>
<comment type="miscellaneous">
    <molecule>Isoform 3</molecule>
    <text evidence="7">Dubious isoform. The N-terminus appears to be derived from exons of the CEP43 locus which is located on the opposing strand of chromosome 6 at a distance of several Mb.</text>
</comment>
<gene>
    <name type="primary">TAGAP</name>
    <name type="synonym">TAGAP1</name>
    <name type="ORF">FKSG15</name>
</gene>
<proteinExistence type="evidence at protein level"/>